<proteinExistence type="inferred from homology"/>
<evidence type="ECO:0000255" key="1">
    <source>
        <dbReference type="HAMAP-Rule" id="MF_04071"/>
    </source>
</evidence>
<evidence type="ECO:0000256" key="2">
    <source>
        <dbReference type="SAM" id="MobiDB-lite"/>
    </source>
</evidence>
<keyword id="KW-0106">Calcium</keyword>
<keyword id="KW-1015">Disulfide bond</keyword>
<keyword id="KW-0325">Glycoprotein</keyword>
<keyword id="KW-0326">Glycosidase</keyword>
<keyword id="KW-1032">Host cell membrane</keyword>
<keyword id="KW-1043">Host membrane</keyword>
<keyword id="KW-0378">Hydrolase</keyword>
<keyword id="KW-0472">Membrane</keyword>
<keyword id="KW-0479">Metal-binding</keyword>
<keyword id="KW-0735">Signal-anchor</keyword>
<keyword id="KW-0812">Transmembrane</keyword>
<keyword id="KW-1133">Transmembrane helix</keyword>
<keyword id="KW-0946">Virion</keyword>
<organism>
    <name type="scientific">Influenza A virus (strain A/Northern Territory/60/1968 H3N2)</name>
    <name type="common">Influenza A virus (strain NT60)</name>
    <name type="synonym">Influenza A virus (strain A/NT/60/1968 H3N2)</name>
    <dbReference type="NCBI Taxonomy" id="384505"/>
    <lineage>
        <taxon>Viruses</taxon>
        <taxon>Riboviria</taxon>
        <taxon>Orthornavirae</taxon>
        <taxon>Negarnaviricota</taxon>
        <taxon>Polyploviricotina</taxon>
        <taxon>Insthoviricetes</taxon>
        <taxon>Articulavirales</taxon>
        <taxon>Orthomyxoviridae</taxon>
        <taxon>Alphainfluenzavirus</taxon>
        <taxon>Alphainfluenzavirus influenzae</taxon>
        <taxon>Influenza A virus</taxon>
    </lineage>
</organism>
<protein>
    <recommendedName>
        <fullName evidence="1">Neuraminidase</fullName>
        <ecNumber evidence="1">3.2.1.18</ecNumber>
    </recommendedName>
</protein>
<reference key="1">
    <citation type="journal article" date="1982" name="Nucleic Acids Res.">
        <title>Sequence of the N2 neuraminidase from influenza virus A/NT/60/68.</title>
        <authorList>
            <person name="Bentley D.R."/>
            <person name="Brownlee G.G."/>
        </authorList>
    </citation>
    <scope>NUCLEOTIDE SEQUENCE [GENOMIC RNA]</scope>
</reference>
<reference key="2">
    <citation type="journal article" date="2004" name="Virus Res.">
        <title>Assembly and budding of influenza virus.</title>
        <authorList>
            <person name="Nayak D.P."/>
            <person name="Hui E.K."/>
            <person name="Barman S."/>
        </authorList>
    </citation>
    <scope>REVIEW</scope>
</reference>
<reference key="3">
    <citation type="journal article" date="2005" name="N. Engl. J. Med.">
        <title>Neuraminidase inhibitors for influenza.</title>
        <authorList>
            <person name="Moscona A."/>
        </authorList>
    </citation>
    <scope>REVIEW</scope>
</reference>
<reference key="4">
    <citation type="journal article" date="2005" name="Biol. Pharm. Bull.">
        <title>Sialobiology of influenza: molecular mechanism of host range variation of influenza viruses.</title>
        <authorList>
            <person name="Suzuki Y."/>
        </authorList>
    </citation>
    <scope>REVIEW</scope>
</reference>
<comment type="function">
    <text evidence="1">Catalyzes the removal of terminal sialic acid residues from viral and cellular glycoconjugates. Cleaves off the terminal sialic acids on the glycosylated HA during virus budding to facilitate virus release. Additionally helps virus spread through the circulation by further removing sialic acids from the cell surface. These cleavages prevent self-aggregation and ensure the efficient spread of the progeny virus from cell to cell. Otherwise, infection would be limited to one round of replication. Described as a receptor-destroying enzyme because it cleaves a terminal sialic acid from the cellular receptors. May facilitate viral invasion of the upper airways by cleaving the sialic acid moieties on the mucin of the airway epithelial cells. Likely to plays a role in the budding process through its association with lipid rafts during intracellular transport. May additionally display a raft-association independent effect on budding. Plays a role in the determination of host range restriction on replication and virulence. Sialidase activity in late endosome/lysosome traffic seems to enhance virus replication.</text>
</comment>
<comment type="catalytic activity">
    <reaction evidence="1">
        <text>Hydrolysis of alpha-(2-&gt;3)-, alpha-(2-&gt;6)-, alpha-(2-&gt;8)- glycosidic linkages of terminal sialic acid residues in oligosaccharides, glycoproteins, glycolipids, colominic acid and synthetic substrates.</text>
        <dbReference type="EC" id="3.2.1.18"/>
    </reaction>
</comment>
<comment type="cofactor">
    <cofactor evidence="1">
        <name>Ca(2+)</name>
        <dbReference type="ChEBI" id="CHEBI:29108"/>
    </cofactor>
</comment>
<comment type="activity regulation">
    <text evidence="1">Inhibited by the neuraminidase inhibitors zanamivir (Relenza) and oseltamivir (Tamiflu). These drugs interfere with the release of progeny virus from infected cells and are effective against all influenza strains. Resistance to neuraminidase inhibitors is quite rare.</text>
</comment>
<comment type="subunit">
    <text evidence="1">Homotetramer.</text>
</comment>
<comment type="subcellular location">
    <subcellularLocation>
        <location evidence="1">Virion membrane</location>
    </subcellularLocation>
    <subcellularLocation>
        <location evidence="1">Host apical cell membrane</location>
        <topology evidence="1">Single-pass type II membrane protein</topology>
    </subcellularLocation>
    <text evidence="1">Preferentially accumulates at the apical plasma membrane in infected polarized epithelial cells, which is the virus assembly site. Uses lipid rafts for cell surface transport and apical sorting. In the virion, forms a mushroom-shaped spike on the surface of the membrane.</text>
</comment>
<comment type="domain">
    <text evidence="1">Intact N-terminus is essential for virion morphogenesis. Possesses two apical sorting signals, one in the ectodomain, which is likely to be a glycan, and the other in the transmembrane domain. The transmembrane domain also plays a role in lipid raft association.</text>
</comment>
<comment type="PTM">
    <text evidence="1">N-glycosylated.</text>
</comment>
<comment type="miscellaneous">
    <text>The influenza A genome consist of 8 RNA segments. Genetic variation of hemagglutinin and/or neuraminidase genes results in the emergence of new influenza strains. The mechanism of variation can be the result of point mutations or the result of genetic reassortment between segments of two different strains.</text>
</comment>
<comment type="similarity">
    <text evidence="1">Belongs to the glycosyl hydrolase 34 family.</text>
</comment>
<dbReference type="EC" id="3.2.1.18" evidence="1"/>
<dbReference type="EMBL" id="J02136">
    <property type="protein sequence ID" value="AAA43399.1"/>
    <property type="molecule type" value="Genomic_RNA"/>
</dbReference>
<dbReference type="PIR" id="A00885">
    <property type="entry name" value="NMIV2"/>
</dbReference>
<dbReference type="SMR" id="P03473"/>
<dbReference type="CAZy" id="GH34">
    <property type="family name" value="Glycoside Hydrolase Family 34"/>
</dbReference>
<dbReference type="GlyCosmos" id="P03473">
    <property type="glycosylation" value="8 sites, No reported glycans"/>
</dbReference>
<dbReference type="GO" id="GO:0020002">
    <property type="term" value="C:host cell plasma membrane"/>
    <property type="evidence" value="ECO:0007669"/>
    <property type="project" value="UniProtKB-SubCell"/>
</dbReference>
<dbReference type="GO" id="GO:0016020">
    <property type="term" value="C:membrane"/>
    <property type="evidence" value="ECO:0007669"/>
    <property type="project" value="UniProtKB-UniRule"/>
</dbReference>
<dbReference type="GO" id="GO:0055036">
    <property type="term" value="C:virion membrane"/>
    <property type="evidence" value="ECO:0007669"/>
    <property type="project" value="UniProtKB-SubCell"/>
</dbReference>
<dbReference type="GO" id="GO:0004308">
    <property type="term" value="F:exo-alpha-sialidase activity"/>
    <property type="evidence" value="ECO:0007669"/>
    <property type="project" value="UniProtKB-UniRule"/>
</dbReference>
<dbReference type="GO" id="GO:0046872">
    <property type="term" value="F:metal ion binding"/>
    <property type="evidence" value="ECO:0007669"/>
    <property type="project" value="UniProtKB-UniRule"/>
</dbReference>
<dbReference type="GO" id="GO:0005975">
    <property type="term" value="P:carbohydrate metabolic process"/>
    <property type="evidence" value="ECO:0007669"/>
    <property type="project" value="InterPro"/>
</dbReference>
<dbReference type="GO" id="GO:0046761">
    <property type="term" value="P:viral budding from plasma membrane"/>
    <property type="evidence" value="ECO:0007669"/>
    <property type="project" value="UniProtKB-UniRule"/>
</dbReference>
<dbReference type="CDD" id="cd15483">
    <property type="entry name" value="Influenza_NA"/>
    <property type="match status" value="1"/>
</dbReference>
<dbReference type="Gene3D" id="2.120.10.10">
    <property type="match status" value="1"/>
</dbReference>
<dbReference type="HAMAP" id="MF_04071">
    <property type="entry name" value="INFV_NRAM"/>
    <property type="match status" value="1"/>
</dbReference>
<dbReference type="InterPro" id="IPR001860">
    <property type="entry name" value="Glyco_hydro_34"/>
</dbReference>
<dbReference type="InterPro" id="IPR033654">
    <property type="entry name" value="Sialidase_Influenza_A/B"/>
</dbReference>
<dbReference type="InterPro" id="IPR036278">
    <property type="entry name" value="Sialidase_sf"/>
</dbReference>
<dbReference type="Pfam" id="PF00064">
    <property type="entry name" value="Neur"/>
    <property type="match status" value="1"/>
</dbReference>
<dbReference type="SUPFAM" id="SSF50939">
    <property type="entry name" value="Sialidases"/>
    <property type="match status" value="1"/>
</dbReference>
<organismHost>
    <name type="scientific">Aves</name>
    <dbReference type="NCBI Taxonomy" id="8782"/>
</organismHost>
<organismHost>
    <name type="scientific">Cetacea</name>
    <name type="common">whales</name>
    <dbReference type="NCBI Taxonomy" id="9721"/>
</organismHost>
<organismHost>
    <name type="scientific">Homo sapiens</name>
    <name type="common">Human</name>
    <dbReference type="NCBI Taxonomy" id="9606"/>
</organismHost>
<organismHost>
    <name type="scientific">Phocidae</name>
    <name type="common">true seals</name>
    <dbReference type="NCBI Taxonomy" id="9709"/>
</organismHost>
<organismHost>
    <name type="scientific">Sus scrofa</name>
    <name type="common">Pig</name>
    <dbReference type="NCBI Taxonomy" id="9823"/>
</organismHost>
<gene>
    <name evidence="1" type="primary">NA</name>
</gene>
<sequence>MNPNQKIITIGSVSLTIATVCFLMQTAILVTTVTLHFKQYECDSPASNQVMPCEPIIIERNITEIVYLNNTTIEKEICPKVVEYRNWSKPQCQITGFAPFSKDNSIRLSAGGDIWVTREPYVSCDHGKCYQFALGQGTTLDNKHSNDTIHDRIPHRTLLMNELGVPFHLGTRQVCIAWSSSSCHDGKAWLHVCITGDDKNATASFIYDGRLVDSIGSWSQNILRTQESECVCINGTCTVVMTDGSASGRADTRILFIEEGKIVHISPLSGSAQHVEECSCYPRYPGVRCICRDNWKGSNRPVVDINMEDYSIDSSYVCSGLVGDTPRNDDRSSNSNCRNPNNERGNQGVKGWAFDNGDDVWMGRTISKDLRSGYETFKVIGGWSTPNSKSQINRQVIVDSDNRSGYSGIFSVEGKSCINRCFYVELIRGRKQEARVWWTSNSIVVFCGTSGTYGTGSWPDGANINFMPI</sequence>
<name>NRAM_I68A6</name>
<feature type="chain" id="PRO_0000078710" description="Neuraminidase">
    <location>
        <begin position="1"/>
        <end position="469"/>
    </location>
</feature>
<feature type="topological domain" description="Intravirion" evidence="1">
    <location>
        <begin position="1"/>
        <end position="6"/>
    </location>
</feature>
<feature type="transmembrane region" description="Helical" evidence="1">
    <location>
        <begin position="7"/>
        <end position="29"/>
    </location>
</feature>
<feature type="topological domain" description="Virion surface" evidence="1">
    <location>
        <begin position="30"/>
        <end position="469"/>
    </location>
</feature>
<feature type="region of interest" description="Involved in apical transport and lipid raft association" evidence="1">
    <location>
        <begin position="11"/>
        <end position="33"/>
    </location>
</feature>
<feature type="region of interest" description="Hypervariable stalk region" evidence="1">
    <location>
        <begin position="36"/>
        <end position="90"/>
    </location>
</feature>
<feature type="region of interest" description="Head of neuraminidase" evidence="1">
    <location>
        <begin position="91"/>
        <end position="469"/>
    </location>
</feature>
<feature type="region of interest" description="Disordered" evidence="2">
    <location>
        <begin position="324"/>
        <end position="350"/>
    </location>
</feature>
<feature type="compositionally biased region" description="Low complexity" evidence="2">
    <location>
        <begin position="333"/>
        <end position="342"/>
    </location>
</feature>
<feature type="active site" description="Proton donor/acceptor" evidence="1">
    <location>
        <position position="151"/>
    </location>
</feature>
<feature type="active site" description="Nucleophile" evidence="1">
    <location>
        <position position="406"/>
    </location>
</feature>
<feature type="binding site" evidence="1">
    <location>
        <position position="118"/>
    </location>
    <ligand>
        <name>substrate</name>
    </ligand>
</feature>
<feature type="binding site" evidence="1">
    <location>
        <position position="152"/>
    </location>
    <ligand>
        <name>substrate</name>
    </ligand>
</feature>
<feature type="binding site" evidence="1">
    <location>
        <begin position="276"/>
        <end position="277"/>
    </location>
    <ligand>
        <name>substrate</name>
    </ligand>
</feature>
<feature type="binding site" evidence="1">
    <location>
        <position position="292"/>
    </location>
    <ligand>
        <name>substrate</name>
    </ligand>
</feature>
<feature type="binding site" evidence="1">
    <location>
        <position position="293"/>
    </location>
    <ligand>
        <name>Ca(2+)</name>
        <dbReference type="ChEBI" id="CHEBI:29108"/>
    </ligand>
</feature>
<feature type="binding site" evidence="1">
    <location>
        <position position="297"/>
    </location>
    <ligand>
        <name>Ca(2+)</name>
        <dbReference type="ChEBI" id="CHEBI:29108"/>
    </ligand>
</feature>
<feature type="binding site" evidence="1">
    <location>
        <position position="324"/>
    </location>
    <ligand>
        <name>Ca(2+)</name>
        <dbReference type="ChEBI" id="CHEBI:29108"/>
    </ligand>
</feature>
<feature type="binding site" evidence="1">
    <location>
        <position position="371"/>
    </location>
    <ligand>
        <name>substrate</name>
    </ligand>
</feature>
<feature type="glycosylation site" description="N-linked (GlcNAc...) asparagine; by host" evidence="1">
    <location>
        <position position="61"/>
    </location>
</feature>
<feature type="glycosylation site" description="N-linked (GlcNAc...) asparagine; by host" evidence="1">
    <location>
        <position position="69"/>
    </location>
</feature>
<feature type="glycosylation site" description="N-linked (GlcNAc...) asparagine; by host" evidence="1">
    <location>
        <position position="70"/>
    </location>
</feature>
<feature type="glycosylation site" description="N-linked (GlcNAc...) asparagine; by host" evidence="1">
    <location>
        <position position="86"/>
    </location>
</feature>
<feature type="glycosylation site" description="N-linked (GlcNAc...) asparagine; by host" evidence="1">
    <location>
        <position position="146"/>
    </location>
</feature>
<feature type="glycosylation site" description="N-linked (GlcNAc...) asparagine; by host" evidence="1">
    <location>
        <position position="200"/>
    </location>
</feature>
<feature type="glycosylation site" description="N-linked (GlcNAc...) asparagine; by host" evidence="1">
    <location>
        <position position="234"/>
    </location>
</feature>
<feature type="glycosylation site" description="N-linked (GlcNAc...) asparagine; by host" evidence="1">
    <location>
        <position position="402"/>
    </location>
</feature>
<feature type="disulfide bond" evidence="1">
    <location>
        <begin position="92"/>
        <end position="417"/>
    </location>
</feature>
<feature type="disulfide bond" evidence="1">
    <location>
        <begin position="124"/>
        <end position="129"/>
    </location>
</feature>
<feature type="disulfide bond" evidence="1">
    <location>
        <begin position="183"/>
        <end position="230"/>
    </location>
</feature>
<feature type="disulfide bond" evidence="1">
    <location>
        <begin position="232"/>
        <end position="237"/>
    </location>
</feature>
<feature type="disulfide bond" evidence="1">
    <location>
        <begin position="278"/>
        <end position="291"/>
    </location>
</feature>
<feature type="disulfide bond" evidence="1">
    <location>
        <begin position="280"/>
        <end position="289"/>
    </location>
</feature>
<feature type="disulfide bond" evidence="1">
    <location>
        <begin position="318"/>
        <end position="337"/>
    </location>
</feature>
<feature type="disulfide bond" evidence="1">
    <location>
        <begin position="421"/>
        <end position="447"/>
    </location>
</feature>
<accession>P03473</accession>